<evidence type="ECO:0000255" key="1">
    <source>
        <dbReference type="PROSITE-ProRule" id="PRU00520"/>
    </source>
</evidence>
<evidence type="ECO:0000305" key="2"/>
<accession>Q971Z4</accession>
<keyword id="KW-0378">Hydrolase</keyword>
<keyword id="KW-1185">Reference proteome</keyword>
<comment type="catalytic activity">
    <reaction>
        <text>an acyl phosphate + H2O = a carboxylate + phosphate + H(+)</text>
        <dbReference type="Rhea" id="RHEA:14965"/>
        <dbReference type="ChEBI" id="CHEBI:15377"/>
        <dbReference type="ChEBI" id="CHEBI:15378"/>
        <dbReference type="ChEBI" id="CHEBI:29067"/>
        <dbReference type="ChEBI" id="CHEBI:43474"/>
        <dbReference type="ChEBI" id="CHEBI:59918"/>
        <dbReference type="EC" id="3.6.1.7"/>
    </reaction>
</comment>
<comment type="similarity">
    <text evidence="2">Belongs to the acylphosphatase family.</text>
</comment>
<gene>
    <name type="primary">acyP</name>
    <name type="ordered locus">STK_12335</name>
    <name type="ORF">STS137</name>
</gene>
<name>ACYP_SULTO</name>
<dbReference type="EC" id="3.6.1.7"/>
<dbReference type="EMBL" id="BA000023">
    <property type="protein sequence ID" value="BAB66275.1"/>
    <property type="molecule type" value="Genomic_DNA"/>
</dbReference>
<dbReference type="RefSeq" id="WP_010979253.1">
    <property type="nucleotide sequence ID" value="NC_003106.2"/>
</dbReference>
<dbReference type="SMR" id="Q971Z4"/>
<dbReference type="STRING" id="273063.STK_12335"/>
<dbReference type="KEGG" id="sto:STK_12335"/>
<dbReference type="PATRIC" id="fig|273063.9.peg.1393"/>
<dbReference type="eggNOG" id="arCOG01674">
    <property type="taxonomic scope" value="Archaea"/>
</dbReference>
<dbReference type="OrthoDB" id="6643at2157"/>
<dbReference type="Proteomes" id="UP000001015">
    <property type="component" value="Chromosome"/>
</dbReference>
<dbReference type="GO" id="GO:0003998">
    <property type="term" value="F:acylphosphatase activity"/>
    <property type="evidence" value="ECO:0007669"/>
    <property type="project" value="UniProtKB-EC"/>
</dbReference>
<dbReference type="FunFam" id="3.30.70.100:FF:000012">
    <property type="entry name" value="Acylphosphatase"/>
    <property type="match status" value="1"/>
</dbReference>
<dbReference type="Gene3D" id="3.30.70.100">
    <property type="match status" value="1"/>
</dbReference>
<dbReference type="InterPro" id="IPR020456">
    <property type="entry name" value="Acylphosphatase"/>
</dbReference>
<dbReference type="InterPro" id="IPR001792">
    <property type="entry name" value="Acylphosphatase-like_dom"/>
</dbReference>
<dbReference type="InterPro" id="IPR036046">
    <property type="entry name" value="Acylphosphatase-like_dom_sf"/>
</dbReference>
<dbReference type="InterPro" id="IPR017968">
    <property type="entry name" value="Acylphosphatase_CS"/>
</dbReference>
<dbReference type="NCBIfam" id="NF011007">
    <property type="entry name" value="PRK14433.1"/>
    <property type="match status" value="1"/>
</dbReference>
<dbReference type="NCBIfam" id="NF011012">
    <property type="entry name" value="PRK14440.1"/>
    <property type="match status" value="1"/>
</dbReference>
<dbReference type="PANTHER" id="PTHR47268">
    <property type="entry name" value="ACYLPHOSPHATASE"/>
    <property type="match status" value="1"/>
</dbReference>
<dbReference type="PANTHER" id="PTHR47268:SF4">
    <property type="entry name" value="ACYLPHOSPHATASE"/>
    <property type="match status" value="1"/>
</dbReference>
<dbReference type="Pfam" id="PF00708">
    <property type="entry name" value="Acylphosphatase"/>
    <property type="match status" value="1"/>
</dbReference>
<dbReference type="SUPFAM" id="SSF54975">
    <property type="entry name" value="Acylphosphatase/BLUF domain-like"/>
    <property type="match status" value="1"/>
</dbReference>
<dbReference type="PROSITE" id="PS00150">
    <property type="entry name" value="ACYLPHOSPHATASE_1"/>
    <property type="match status" value="1"/>
</dbReference>
<dbReference type="PROSITE" id="PS00151">
    <property type="entry name" value="ACYLPHOSPHATASE_2"/>
    <property type="match status" value="1"/>
</dbReference>
<dbReference type="PROSITE" id="PS51160">
    <property type="entry name" value="ACYLPHOSPHATASE_3"/>
    <property type="match status" value="1"/>
</dbReference>
<organism>
    <name type="scientific">Sulfurisphaera tokodaii (strain DSM 16993 / JCM 10545 / NBRC 100140 / 7)</name>
    <name type="common">Sulfolobus tokodaii</name>
    <dbReference type="NCBI Taxonomy" id="273063"/>
    <lineage>
        <taxon>Archaea</taxon>
        <taxon>Thermoproteota</taxon>
        <taxon>Thermoprotei</taxon>
        <taxon>Sulfolobales</taxon>
        <taxon>Sulfolobaceae</taxon>
        <taxon>Sulfurisphaera</taxon>
    </lineage>
</organism>
<protein>
    <recommendedName>
        <fullName>Acylphosphatase</fullName>
        <ecNumber>3.6.1.7</ecNumber>
    </recommendedName>
    <alternativeName>
        <fullName>Acylphosphate phosphohydrolase</fullName>
    </alternativeName>
</protein>
<feature type="chain" id="PRO_0000326871" description="Acylphosphatase">
    <location>
        <begin position="1"/>
        <end position="90"/>
    </location>
</feature>
<feature type="domain" description="Acylphosphatase-like" evidence="1">
    <location>
        <begin position="4"/>
        <end position="90"/>
    </location>
</feature>
<feature type="active site" evidence="1">
    <location>
        <position position="19"/>
    </location>
</feature>
<feature type="active site" evidence="1">
    <location>
        <position position="37"/>
    </location>
</feature>
<proteinExistence type="inferred from homology"/>
<reference key="1">
    <citation type="journal article" date="2001" name="DNA Res.">
        <title>Complete genome sequence of an aerobic thermoacidophilic Crenarchaeon, Sulfolobus tokodaii strain7.</title>
        <authorList>
            <person name="Kawarabayasi Y."/>
            <person name="Hino Y."/>
            <person name="Horikawa H."/>
            <person name="Jin-no K."/>
            <person name="Takahashi M."/>
            <person name="Sekine M."/>
            <person name="Baba S."/>
            <person name="Ankai A."/>
            <person name="Kosugi H."/>
            <person name="Hosoyama A."/>
            <person name="Fukui S."/>
            <person name="Nagai Y."/>
            <person name="Nishijima K."/>
            <person name="Otsuka R."/>
            <person name="Nakazawa H."/>
            <person name="Takamiya M."/>
            <person name="Kato Y."/>
            <person name="Yoshizawa T."/>
            <person name="Tanaka T."/>
            <person name="Kudoh Y."/>
            <person name="Yamazaki J."/>
            <person name="Kushida N."/>
            <person name="Oguchi A."/>
            <person name="Aoki K."/>
            <person name="Masuda S."/>
            <person name="Yanagii M."/>
            <person name="Nishimura M."/>
            <person name="Yamagishi A."/>
            <person name="Oshima T."/>
            <person name="Kikuchi H."/>
        </authorList>
    </citation>
    <scope>NUCLEOTIDE SEQUENCE [LARGE SCALE GENOMIC DNA]</scope>
    <source>
        <strain>DSM 16993 / JCM 10545 / NBRC 100140 / 7</strain>
    </source>
</reference>
<sequence>MLKRMYVKVYGIVQGVGFRRYVQIHAARLGIKGYAKNLPDGSVEIVAEGYEEALQKLLEYIKRGPPLSRVEKIEYRFYEYKGEFNNFDTY</sequence>